<keyword id="KW-0574">Periplasm</keyword>
<keyword id="KW-0732">Signal</keyword>
<proteinExistence type="inferred from homology"/>
<evidence type="ECO:0000255" key="1"/>
<evidence type="ECO:0000305" key="2">
    <source>
    </source>
</evidence>
<comment type="subcellular location">
    <subcellularLocation>
        <location evidence="2">Periplasm</location>
    </subcellularLocation>
</comment>
<feature type="signal peptide" evidence="1">
    <location>
        <begin position="1"/>
        <end position="32"/>
    </location>
</feature>
<feature type="chain" id="PRO_0000415895" description="Thioredoxin-related protein DsbJ">
    <location>
        <begin position="33"/>
        <end position="348"/>
    </location>
</feature>
<reference key="1">
    <citation type="journal article" date="1999" name="Nat. Genet.">
        <title>Comparative genomes of Chlamydia pneumoniae and C. trachomatis.</title>
        <authorList>
            <person name="Kalman S."/>
            <person name="Mitchell W.P."/>
            <person name="Marathe R."/>
            <person name="Lammel C.J."/>
            <person name="Fan J."/>
            <person name="Hyman R.W."/>
            <person name="Olinger L."/>
            <person name="Grimwood J."/>
            <person name="Davis R.W."/>
            <person name="Stephens R.S."/>
        </authorList>
    </citation>
    <scope>NUCLEOTIDE SEQUENCE [LARGE SCALE GENOMIC DNA]</scope>
    <source>
        <strain>CWL029</strain>
    </source>
</reference>
<reference key="2">
    <citation type="journal article" date="2000" name="Nucleic Acids Res.">
        <title>Genome sequences of Chlamydia trachomatis MoPn and Chlamydia pneumoniae AR39.</title>
        <authorList>
            <person name="Read T.D."/>
            <person name="Brunham R.C."/>
            <person name="Shen C."/>
            <person name="Gill S.R."/>
            <person name="Heidelberg J.F."/>
            <person name="White O."/>
            <person name="Hickey E.K."/>
            <person name="Peterson J.D."/>
            <person name="Utterback T.R."/>
            <person name="Berry K.J."/>
            <person name="Bass S."/>
            <person name="Linher K.D."/>
            <person name="Weidman J.F."/>
            <person name="Khouri H.M."/>
            <person name="Craven B."/>
            <person name="Bowman C."/>
            <person name="Dodson R.J."/>
            <person name="Gwinn M.L."/>
            <person name="Nelson W.C."/>
            <person name="DeBoy R.T."/>
            <person name="Kolonay J.F."/>
            <person name="McClarty G."/>
            <person name="Salzberg S.L."/>
            <person name="Eisen J.A."/>
            <person name="Fraser C.M."/>
        </authorList>
    </citation>
    <scope>NUCLEOTIDE SEQUENCE [LARGE SCALE GENOMIC DNA]</scope>
    <source>
        <strain>AR39</strain>
    </source>
</reference>
<reference key="3">
    <citation type="journal article" date="2000" name="Nucleic Acids Res.">
        <title>Comparison of whole genome sequences of Chlamydia pneumoniae J138 from Japan and CWL029 from USA.</title>
        <authorList>
            <person name="Shirai M."/>
            <person name="Hirakawa H."/>
            <person name="Kimoto M."/>
            <person name="Tabuchi M."/>
            <person name="Kishi F."/>
            <person name="Ouchi K."/>
            <person name="Shiba T."/>
            <person name="Ishii K."/>
            <person name="Hattori M."/>
            <person name="Kuhara S."/>
            <person name="Nakazawa T."/>
        </authorList>
    </citation>
    <scope>NUCLEOTIDE SEQUENCE [LARGE SCALE GENOMIC DNA]</scope>
    <source>
        <strain>J138</strain>
    </source>
</reference>
<reference key="4">
    <citation type="submission" date="2002-05" db="EMBL/GenBank/DDBJ databases">
        <title>The genome sequence of Chlamydia pneumoniae TW183 and comparison with other Chlamydia strains based on whole genome sequence analysis.</title>
        <authorList>
            <person name="Geng M.M."/>
            <person name="Schuhmacher A."/>
            <person name="Muehldorfer I."/>
            <person name="Bensch K.W."/>
            <person name="Schaefer K.P."/>
            <person name="Schneider S."/>
            <person name="Pohl T."/>
            <person name="Essig A."/>
            <person name="Marre R."/>
            <person name="Melchers K."/>
        </authorList>
    </citation>
    <scope>NUCLEOTIDE SEQUENCE [LARGE SCALE GENOMIC DNA]</scope>
    <source>
        <strain>TW-183</strain>
    </source>
</reference>
<reference key="5">
    <citation type="journal article" date="2008" name="J. Biol. Chem.">
        <title>Insight into disulfide bond catalysis in Chlamydia from the structure and function of DsbH, a novel oxidoreductase.</title>
        <authorList>
            <person name="Mac T.T."/>
            <person name="von Hacht A."/>
            <person name="Hung K.C."/>
            <person name="Dutton R.J."/>
            <person name="Boyd D."/>
            <person name="Bardwell J.C."/>
            <person name="Ulmer T.S."/>
        </authorList>
    </citation>
    <scope>IDENTIFICATION</scope>
    <scope>GENE NAME</scope>
    <scope>SUBCELLULAR LOCATION</scope>
    <source>
        <strain>TW-183</strain>
    </source>
</reference>
<sequence length="348" mass="40493">MILLQNIKRCSLKQLKVLATLLLSLSLPTLEAAENRDSDSIVWHLDYQEALQKSKEAELPLLVIFSGSDWNGPCMKIRKEVLESPEFIKRVQGKFVCVEVEYLKHRPQVENIRQQNLALKSKFKINELPCMILLSHEEREIYRIGSFGNETGSNLGDSLCHIVESDSLLRRAFPMMTSLSLSELQRYYRLAEELSHKEFLKHALELGVRSDDYFFLSEKFRLLVEVGKMDSEECQRIKKRLLNKDPKNEKQTHFTVALIEFQELAKRSRAGVRQDASQVIAPLESYISQFGQQDKDNLWRVEMMIAQFYLDSDQWHHALQHAEVAFEAAPNEVRSHISRSLEYIRHQS</sequence>
<accession>Q9Z6X3</accession>
<accession>Q7AI17</accession>
<accession>Q7BWQ8</accession>
<accession>Q7DE38</accession>
<organism>
    <name type="scientific">Chlamydia pneumoniae</name>
    <name type="common">Chlamydophila pneumoniae</name>
    <dbReference type="NCBI Taxonomy" id="83558"/>
    <lineage>
        <taxon>Bacteria</taxon>
        <taxon>Pseudomonadati</taxon>
        <taxon>Chlamydiota</taxon>
        <taxon>Chlamydiia</taxon>
        <taxon>Chlamydiales</taxon>
        <taxon>Chlamydiaceae</taxon>
        <taxon>Chlamydia/Chlamydophila group</taxon>
        <taxon>Chlamydia</taxon>
    </lineage>
</organism>
<gene>
    <name type="primary">dsbJ</name>
    <name type="ordered locus">CPn_0933</name>
    <name type="ordered locus">CP_0928</name>
    <name type="ordered locus">CPj0933</name>
    <name type="ordered locus">CpB0968</name>
</gene>
<name>DSBJ_CHLPN</name>
<dbReference type="EMBL" id="AE001363">
    <property type="protein sequence ID" value="AAD19071.1"/>
    <property type="molecule type" value="Genomic_DNA"/>
</dbReference>
<dbReference type="EMBL" id="AE002161">
    <property type="protein sequence ID" value="AAF38711.1"/>
    <property type="molecule type" value="Genomic_DNA"/>
</dbReference>
<dbReference type="EMBL" id="BA000008">
    <property type="protein sequence ID" value="BAA99141.1"/>
    <property type="molecule type" value="Genomic_DNA"/>
</dbReference>
<dbReference type="EMBL" id="AE009440">
    <property type="protein sequence ID" value="AAP98896.1"/>
    <property type="molecule type" value="Genomic_DNA"/>
</dbReference>
<dbReference type="PIR" id="C86607">
    <property type="entry name" value="C86607"/>
</dbReference>
<dbReference type="PIR" id="G72016">
    <property type="entry name" value="G72016"/>
</dbReference>
<dbReference type="RefSeq" id="NP_225128.1">
    <property type="nucleotide sequence ID" value="NC_000922.1"/>
</dbReference>
<dbReference type="RefSeq" id="WP_010883568.1">
    <property type="nucleotide sequence ID" value="NZ_LN847257.1"/>
</dbReference>
<dbReference type="SMR" id="Q9Z6X3"/>
<dbReference type="STRING" id="406984.CPK_ORF00348"/>
<dbReference type="GeneID" id="45050989"/>
<dbReference type="KEGG" id="cpa:CP_0928"/>
<dbReference type="KEGG" id="cpj:CPj0933"/>
<dbReference type="KEGG" id="cpn:CPn_0933"/>
<dbReference type="KEGG" id="cpt:CpB0968"/>
<dbReference type="PATRIC" id="fig|115713.3.peg.1021"/>
<dbReference type="eggNOG" id="COG0526">
    <property type="taxonomic scope" value="Bacteria"/>
</dbReference>
<dbReference type="HOGENOM" id="CLU_068221_0_0_0"/>
<dbReference type="OMA" id="VWRIEMM"/>
<dbReference type="OrthoDB" id="18626at2"/>
<dbReference type="Proteomes" id="UP000000583">
    <property type="component" value="Chromosome"/>
</dbReference>
<dbReference type="Proteomes" id="UP000000801">
    <property type="component" value="Chromosome"/>
</dbReference>
<dbReference type="GO" id="GO:0042597">
    <property type="term" value="C:periplasmic space"/>
    <property type="evidence" value="ECO:0007669"/>
    <property type="project" value="UniProtKB-SubCell"/>
</dbReference>
<dbReference type="Gene3D" id="3.40.30.10">
    <property type="entry name" value="Glutaredoxin"/>
    <property type="match status" value="1"/>
</dbReference>
<dbReference type="InterPro" id="IPR051099">
    <property type="entry name" value="AGR/TXD"/>
</dbReference>
<dbReference type="InterPro" id="IPR036249">
    <property type="entry name" value="Thioredoxin-like_sf"/>
</dbReference>
<dbReference type="PANTHER" id="PTHR15337">
    <property type="entry name" value="ANTERIOR GRADIENT PROTEIN-RELATED"/>
    <property type="match status" value="1"/>
</dbReference>
<dbReference type="PANTHER" id="PTHR15337:SF11">
    <property type="entry name" value="THIOREDOXIN DOMAIN-CONTAINING PROTEIN"/>
    <property type="match status" value="1"/>
</dbReference>
<dbReference type="Pfam" id="PF13899">
    <property type="entry name" value="Thioredoxin_7"/>
    <property type="match status" value="1"/>
</dbReference>
<dbReference type="SUPFAM" id="SSF52833">
    <property type="entry name" value="Thioredoxin-like"/>
    <property type="match status" value="1"/>
</dbReference>
<protein>
    <recommendedName>
        <fullName>Thioredoxin-related protein DsbJ</fullName>
    </recommendedName>
</protein>